<reference key="1">
    <citation type="journal article" date="2008" name="J. Bacteriol.">
        <title>Genome sequence of a nephritogenic and highly transformable M49 strain of Streptococcus pyogenes.</title>
        <authorList>
            <person name="McShan W.M."/>
            <person name="Ferretti J.J."/>
            <person name="Karasawa T."/>
            <person name="Suvorov A.N."/>
            <person name="Lin S."/>
            <person name="Qin B."/>
            <person name="Jia H."/>
            <person name="Kenton S."/>
            <person name="Najar F."/>
            <person name="Wu H."/>
            <person name="Scott J."/>
            <person name="Roe B.A."/>
            <person name="Savic D.J."/>
        </authorList>
    </citation>
    <scope>NUCLEOTIDE SEQUENCE [LARGE SCALE GENOMIC DNA]</scope>
    <source>
        <strain>NZ131</strain>
    </source>
</reference>
<comment type="subcellular location">
    <subcellularLocation>
        <location evidence="1">Cytoplasm</location>
    </subcellularLocation>
</comment>
<comment type="similarity">
    <text evidence="1">Belongs to the UPF0298 family.</text>
</comment>
<proteinExistence type="inferred from homology"/>
<feature type="chain" id="PRO_1000137292" description="UPF0298 protein Spy49_0325">
    <location>
        <begin position="1"/>
        <end position="91"/>
    </location>
</feature>
<organism>
    <name type="scientific">Streptococcus pyogenes serotype M49 (strain NZ131)</name>
    <dbReference type="NCBI Taxonomy" id="471876"/>
    <lineage>
        <taxon>Bacteria</taxon>
        <taxon>Bacillati</taxon>
        <taxon>Bacillota</taxon>
        <taxon>Bacilli</taxon>
        <taxon>Lactobacillales</taxon>
        <taxon>Streptococcaceae</taxon>
        <taxon>Streptococcus</taxon>
    </lineage>
</organism>
<protein>
    <recommendedName>
        <fullName evidence="1">UPF0298 protein Spy49_0325</fullName>
    </recommendedName>
</protein>
<dbReference type="EMBL" id="CP000829">
    <property type="protein sequence ID" value="ACI60661.1"/>
    <property type="molecule type" value="Genomic_DNA"/>
</dbReference>
<dbReference type="SMR" id="B5XJZ9"/>
<dbReference type="KEGG" id="soz:Spy49_0325"/>
<dbReference type="HOGENOM" id="CLU_159890_1_0_9"/>
<dbReference type="Proteomes" id="UP000001039">
    <property type="component" value="Chromosome"/>
</dbReference>
<dbReference type="GO" id="GO:0005737">
    <property type="term" value="C:cytoplasm"/>
    <property type="evidence" value="ECO:0007669"/>
    <property type="project" value="UniProtKB-SubCell"/>
</dbReference>
<dbReference type="HAMAP" id="MF_01126">
    <property type="entry name" value="UPF0298"/>
    <property type="match status" value="1"/>
</dbReference>
<dbReference type="InterPro" id="IPR016979">
    <property type="entry name" value="DUF2129"/>
</dbReference>
<dbReference type="NCBIfam" id="NF002631">
    <property type="entry name" value="PRK02302.1"/>
    <property type="match status" value="1"/>
</dbReference>
<dbReference type="Pfam" id="PF09902">
    <property type="entry name" value="DUF2129"/>
    <property type="match status" value="1"/>
</dbReference>
<dbReference type="PIRSF" id="PIRSF031653">
    <property type="entry name" value="UCP031653"/>
    <property type="match status" value="1"/>
</dbReference>
<accession>B5XJZ9</accession>
<evidence type="ECO:0000255" key="1">
    <source>
        <dbReference type="HAMAP-Rule" id="MF_01126"/>
    </source>
</evidence>
<gene>
    <name type="ordered locus">Spy49_0325</name>
</gene>
<name>Y325_STRPZ</name>
<keyword id="KW-0963">Cytoplasm</keyword>
<sequence>MFQKQERIGLVVYLYYNRDARKLSKFGDLYYHSKRSRYLIIYINKNDLDTKLEEMRRLKCVKDIRPSAFDDIDRQFVGNLHRDETNNHQKG</sequence>